<name>FLUC_CHLPD</name>
<proteinExistence type="inferred from homology"/>
<evidence type="ECO:0000255" key="1">
    <source>
        <dbReference type="HAMAP-Rule" id="MF_00454"/>
    </source>
</evidence>
<sequence>MLMKQVSAFLLVGIGGFLGSAARYGASLLLSPVAGGLPLATFSVNIIGCFFIGFISELALSTTLVSPESRLFLVTGFCGGFTTFSSYIFENASLLKDGQMLYTSAYLAGSVIGGFVALYSGTFFAKIWT</sequence>
<reference key="1">
    <citation type="submission" date="2006-12" db="EMBL/GenBank/DDBJ databases">
        <title>Complete sequence of Chlorobium phaeobacteroides DSM 266.</title>
        <authorList>
            <consortium name="US DOE Joint Genome Institute"/>
            <person name="Copeland A."/>
            <person name="Lucas S."/>
            <person name="Lapidus A."/>
            <person name="Barry K."/>
            <person name="Detter J.C."/>
            <person name="Glavina del Rio T."/>
            <person name="Hammon N."/>
            <person name="Israni S."/>
            <person name="Pitluck S."/>
            <person name="Goltsman E."/>
            <person name="Schmutz J."/>
            <person name="Larimer F."/>
            <person name="Land M."/>
            <person name="Hauser L."/>
            <person name="Mikhailova N."/>
            <person name="Li T."/>
            <person name="Overmann J."/>
            <person name="Bryant D.A."/>
            <person name="Richardson P."/>
        </authorList>
    </citation>
    <scope>NUCLEOTIDE SEQUENCE [LARGE SCALE GENOMIC DNA]</scope>
    <source>
        <strain>DSM 266 / SMG 266 / 2430</strain>
    </source>
</reference>
<dbReference type="EMBL" id="CP000492">
    <property type="protein sequence ID" value="ABL66547.1"/>
    <property type="molecule type" value="Genomic_DNA"/>
</dbReference>
<dbReference type="RefSeq" id="WP_011746324.1">
    <property type="nucleotide sequence ID" value="NC_008639.1"/>
</dbReference>
<dbReference type="SMR" id="A1BJH0"/>
<dbReference type="STRING" id="290317.Cpha266_2559"/>
<dbReference type="KEGG" id="cph:Cpha266_2559"/>
<dbReference type="eggNOG" id="COG0239">
    <property type="taxonomic scope" value="Bacteria"/>
</dbReference>
<dbReference type="HOGENOM" id="CLU_114342_2_3_10"/>
<dbReference type="OrthoDB" id="9815830at2"/>
<dbReference type="Proteomes" id="UP000008701">
    <property type="component" value="Chromosome"/>
</dbReference>
<dbReference type="GO" id="GO:0005886">
    <property type="term" value="C:plasma membrane"/>
    <property type="evidence" value="ECO:0007669"/>
    <property type="project" value="UniProtKB-SubCell"/>
</dbReference>
<dbReference type="GO" id="GO:0062054">
    <property type="term" value="F:fluoride channel activity"/>
    <property type="evidence" value="ECO:0007669"/>
    <property type="project" value="UniProtKB-UniRule"/>
</dbReference>
<dbReference type="GO" id="GO:0046872">
    <property type="term" value="F:metal ion binding"/>
    <property type="evidence" value="ECO:0007669"/>
    <property type="project" value="UniProtKB-KW"/>
</dbReference>
<dbReference type="GO" id="GO:0140114">
    <property type="term" value="P:cellular detoxification of fluoride"/>
    <property type="evidence" value="ECO:0007669"/>
    <property type="project" value="UniProtKB-UniRule"/>
</dbReference>
<dbReference type="HAMAP" id="MF_00454">
    <property type="entry name" value="FluC"/>
    <property type="match status" value="1"/>
</dbReference>
<dbReference type="InterPro" id="IPR003691">
    <property type="entry name" value="FluC"/>
</dbReference>
<dbReference type="NCBIfam" id="TIGR00494">
    <property type="entry name" value="crcB"/>
    <property type="match status" value="1"/>
</dbReference>
<dbReference type="PANTHER" id="PTHR28259">
    <property type="entry name" value="FLUORIDE EXPORT PROTEIN 1-RELATED"/>
    <property type="match status" value="1"/>
</dbReference>
<dbReference type="PANTHER" id="PTHR28259:SF1">
    <property type="entry name" value="FLUORIDE EXPORT PROTEIN 1-RELATED"/>
    <property type="match status" value="1"/>
</dbReference>
<dbReference type="Pfam" id="PF02537">
    <property type="entry name" value="CRCB"/>
    <property type="match status" value="1"/>
</dbReference>
<gene>
    <name evidence="1" type="primary">fluC</name>
    <name evidence="1" type="synonym">crcB</name>
    <name type="ordered locus">Cpha266_2559</name>
</gene>
<comment type="function">
    <text evidence="1">Fluoride-specific ion channel. Important for reducing fluoride concentration in the cell, thus reducing its toxicity.</text>
</comment>
<comment type="catalytic activity">
    <reaction evidence="1">
        <text>fluoride(in) = fluoride(out)</text>
        <dbReference type="Rhea" id="RHEA:76159"/>
        <dbReference type="ChEBI" id="CHEBI:17051"/>
    </reaction>
    <physiologicalReaction direction="left-to-right" evidence="1">
        <dbReference type="Rhea" id="RHEA:76160"/>
    </physiologicalReaction>
</comment>
<comment type="activity regulation">
    <text evidence="1">Na(+) is not transported, but it plays an essential structural role and its presence is essential for fluoride channel function.</text>
</comment>
<comment type="subcellular location">
    <subcellularLocation>
        <location evidence="1">Cell inner membrane</location>
        <topology evidence="1">Multi-pass membrane protein</topology>
    </subcellularLocation>
</comment>
<comment type="similarity">
    <text evidence="1">Belongs to the fluoride channel Fluc/FEX (TC 1.A.43) family.</text>
</comment>
<organism>
    <name type="scientific">Chlorobium phaeobacteroides (strain DSM 266 / SMG 266 / 2430)</name>
    <dbReference type="NCBI Taxonomy" id="290317"/>
    <lineage>
        <taxon>Bacteria</taxon>
        <taxon>Pseudomonadati</taxon>
        <taxon>Chlorobiota</taxon>
        <taxon>Chlorobiia</taxon>
        <taxon>Chlorobiales</taxon>
        <taxon>Chlorobiaceae</taxon>
        <taxon>Chlorobium/Pelodictyon group</taxon>
        <taxon>Chlorobium</taxon>
    </lineage>
</organism>
<accession>A1BJH0</accession>
<protein>
    <recommendedName>
        <fullName evidence="1">Fluoride-specific ion channel FluC</fullName>
    </recommendedName>
</protein>
<feature type="chain" id="PRO_1000026380" description="Fluoride-specific ion channel FluC">
    <location>
        <begin position="1"/>
        <end position="129"/>
    </location>
</feature>
<feature type="transmembrane region" description="Helical" evidence="1">
    <location>
        <begin position="1"/>
        <end position="21"/>
    </location>
</feature>
<feature type="transmembrane region" description="Helical" evidence="1">
    <location>
        <begin position="35"/>
        <end position="55"/>
    </location>
</feature>
<feature type="transmembrane region" description="Helical" evidence="1">
    <location>
        <begin position="71"/>
        <end position="91"/>
    </location>
</feature>
<feature type="transmembrane region" description="Helical" evidence="1">
    <location>
        <begin position="105"/>
        <end position="125"/>
    </location>
</feature>
<feature type="binding site" evidence="1">
    <location>
        <position position="79"/>
    </location>
    <ligand>
        <name>Na(+)</name>
        <dbReference type="ChEBI" id="CHEBI:29101"/>
        <note>structural</note>
    </ligand>
</feature>
<feature type="binding site" evidence="1">
    <location>
        <position position="82"/>
    </location>
    <ligand>
        <name>Na(+)</name>
        <dbReference type="ChEBI" id="CHEBI:29101"/>
        <note>structural</note>
    </ligand>
</feature>
<keyword id="KW-0997">Cell inner membrane</keyword>
<keyword id="KW-1003">Cell membrane</keyword>
<keyword id="KW-0407">Ion channel</keyword>
<keyword id="KW-0406">Ion transport</keyword>
<keyword id="KW-0472">Membrane</keyword>
<keyword id="KW-0479">Metal-binding</keyword>
<keyword id="KW-1185">Reference proteome</keyword>
<keyword id="KW-0915">Sodium</keyword>
<keyword id="KW-0812">Transmembrane</keyword>
<keyword id="KW-1133">Transmembrane helix</keyword>
<keyword id="KW-0813">Transport</keyword>